<dbReference type="EMBL" id="CH476601">
    <property type="protein sequence ID" value="EAU33630.1"/>
    <property type="molecule type" value="Genomic_DNA"/>
</dbReference>
<dbReference type="RefSeq" id="XP_001215047.1">
    <property type="nucleotide sequence ID" value="XM_001215047.1"/>
</dbReference>
<dbReference type="SMR" id="Q0CKB5"/>
<dbReference type="STRING" id="341663.Q0CKB5"/>
<dbReference type="EnsemblFungi" id="EAU33630">
    <property type="protein sequence ID" value="EAU33630"/>
    <property type="gene ID" value="ATEG_05869"/>
</dbReference>
<dbReference type="GeneID" id="4321731"/>
<dbReference type="VEuPathDB" id="FungiDB:ATEG_05869"/>
<dbReference type="eggNOG" id="KOG3780">
    <property type="taxonomic scope" value="Eukaryota"/>
</dbReference>
<dbReference type="HOGENOM" id="CLU_018982_2_0_1"/>
<dbReference type="OMA" id="GMATPFH"/>
<dbReference type="OrthoDB" id="2333384at2759"/>
<dbReference type="Proteomes" id="UP000007963">
    <property type="component" value="Unassembled WGS sequence"/>
</dbReference>
<dbReference type="GO" id="GO:0005829">
    <property type="term" value="C:cytosol"/>
    <property type="evidence" value="ECO:0007669"/>
    <property type="project" value="TreeGrafter"/>
</dbReference>
<dbReference type="GO" id="GO:0005886">
    <property type="term" value="C:plasma membrane"/>
    <property type="evidence" value="ECO:0007669"/>
    <property type="project" value="TreeGrafter"/>
</dbReference>
<dbReference type="GO" id="GO:0030674">
    <property type="term" value="F:protein-macromolecule adaptor activity"/>
    <property type="evidence" value="ECO:0007669"/>
    <property type="project" value="TreeGrafter"/>
</dbReference>
<dbReference type="GO" id="GO:0031625">
    <property type="term" value="F:ubiquitin protein ligase binding"/>
    <property type="evidence" value="ECO:0007669"/>
    <property type="project" value="TreeGrafter"/>
</dbReference>
<dbReference type="GO" id="GO:0031396">
    <property type="term" value="P:regulation of protein ubiquitination"/>
    <property type="evidence" value="ECO:0000250"/>
    <property type="project" value="UniProtKB"/>
</dbReference>
<dbReference type="GO" id="GO:0070086">
    <property type="term" value="P:ubiquitin-dependent endocytosis"/>
    <property type="evidence" value="ECO:0007669"/>
    <property type="project" value="TreeGrafter"/>
</dbReference>
<dbReference type="FunFam" id="2.60.40.640:FF:000018">
    <property type="entry name" value="HECT-type ubiquitin ligase-interacting protein creD"/>
    <property type="match status" value="1"/>
</dbReference>
<dbReference type="Gene3D" id="2.60.40.640">
    <property type="match status" value="1"/>
</dbReference>
<dbReference type="InterPro" id="IPR014752">
    <property type="entry name" value="Arrestin-like_C"/>
</dbReference>
<dbReference type="InterPro" id="IPR011021">
    <property type="entry name" value="Arrestin-like_N"/>
</dbReference>
<dbReference type="InterPro" id="IPR011022">
    <property type="entry name" value="Arrestin_C-like"/>
</dbReference>
<dbReference type="InterPro" id="IPR050357">
    <property type="entry name" value="Arrestin_domain-protein"/>
</dbReference>
<dbReference type="InterPro" id="IPR014756">
    <property type="entry name" value="Ig_E-set"/>
</dbReference>
<dbReference type="PANTHER" id="PTHR11188">
    <property type="entry name" value="ARRESTIN DOMAIN CONTAINING PROTEIN"/>
    <property type="match status" value="1"/>
</dbReference>
<dbReference type="PANTHER" id="PTHR11188:SF17">
    <property type="entry name" value="FI21816P1"/>
    <property type="match status" value="1"/>
</dbReference>
<dbReference type="Pfam" id="PF02752">
    <property type="entry name" value="Arrestin_C"/>
    <property type="match status" value="1"/>
</dbReference>
<dbReference type="Pfam" id="PF00339">
    <property type="entry name" value="Arrestin_N"/>
    <property type="match status" value="1"/>
</dbReference>
<dbReference type="SMART" id="SM01017">
    <property type="entry name" value="Arrestin_C"/>
    <property type="match status" value="1"/>
</dbReference>
<dbReference type="SUPFAM" id="SSF81296">
    <property type="entry name" value="E set domains"/>
    <property type="match status" value="1"/>
</dbReference>
<protein>
    <recommendedName>
        <fullName>Probable HECT-type ubiquitin ligase-interacting protein creD</fullName>
    </recommendedName>
    <alternativeName>
        <fullName>Carbon catabolite repressor D</fullName>
    </alternativeName>
</protein>
<proteinExistence type="inferred from homology"/>
<reference key="1">
    <citation type="submission" date="2005-09" db="EMBL/GenBank/DDBJ databases">
        <title>Annotation of the Aspergillus terreus NIH2624 genome.</title>
        <authorList>
            <person name="Birren B.W."/>
            <person name="Lander E.S."/>
            <person name="Galagan J.E."/>
            <person name="Nusbaum C."/>
            <person name="Devon K."/>
            <person name="Henn M."/>
            <person name="Ma L.-J."/>
            <person name="Jaffe D.B."/>
            <person name="Butler J."/>
            <person name="Alvarez P."/>
            <person name="Gnerre S."/>
            <person name="Grabherr M."/>
            <person name="Kleber M."/>
            <person name="Mauceli E.W."/>
            <person name="Brockman W."/>
            <person name="Rounsley S."/>
            <person name="Young S.K."/>
            <person name="LaButti K."/>
            <person name="Pushparaj V."/>
            <person name="DeCaprio D."/>
            <person name="Crawford M."/>
            <person name="Koehrsen M."/>
            <person name="Engels R."/>
            <person name="Montgomery P."/>
            <person name="Pearson M."/>
            <person name="Howarth C."/>
            <person name="Larson L."/>
            <person name="Luoma S."/>
            <person name="White J."/>
            <person name="Alvarado L."/>
            <person name="Kodira C.D."/>
            <person name="Zeng Q."/>
            <person name="Oleary S."/>
            <person name="Yandava C."/>
            <person name="Denning D.W."/>
            <person name="Nierman W.C."/>
            <person name="Milne T."/>
            <person name="Madden K."/>
        </authorList>
    </citation>
    <scope>NUCLEOTIDE SEQUENCE [LARGE SCALE GENOMIC DNA]</scope>
    <source>
        <strain>NIH 2624 / FGSC A1156</strain>
    </source>
</reference>
<name>CRED_ASPTN</name>
<accession>Q0CKB5</accession>
<evidence type="ECO:0000250" key="1"/>
<evidence type="ECO:0000256" key="2">
    <source>
        <dbReference type="SAM" id="MobiDB-lite"/>
    </source>
</evidence>
<evidence type="ECO:0000305" key="3"/>
<feature type="chain" id="PRO_0000395700" description="Probable HECT-type ubiquitin ligase-interacting protein creD">
    <location>
        <begin position="1"/>
        <end position="577"/>
    </location>
</feature>
<feature type="region of interest" description="Disordered" evidence="2">
    <location>
        <begin position="376"/>
        <end position="398"/>
    </location>
</feature>
<feature type="region of interest" description="Disordered" evidence="2">
    <location>
        <begin position="428"/>
        <end position="566"/>
    </location>
</feature>
<feature type="compositionally biased region" description="Polar residues" evidence="2">
    <location>
        <begin position="428"/>
        <end position="447"/>
    </location>
</feature>
<feature type="compositionally biased region" description="Polar residues" evidence="2">
    <location>
        <begin position="460"/>
        <end position="472"/>
    </location>
</feature>
<feature type="compositionally biased region" description="Basic and acidic residues" evidence="2">
    <location>
        <begin position="473"/>
        <end position="486"/>
    </location>
</feature>
<feature type="compositionally biased region" description="Polar residues" evidence="2">
    <location>
        <begin position="528"/>
        <end position="544"/>
    </location>
</feature>
<keyword id="KW-1185">Reference proteome</keyword>
<keyword id="KW-0833">Ubl conjugation pathway</keyword>
<organism>
    <name type="scientific">Aspergillus terreus (strain NIH 2624 / FGSC A1156)</name>
    <dbReference type="NCBI Taxonomy" id="341663"/>
    <lineage>
        <taxon>Eukaryota</taxon>
        <taxon>Fungi</taxon>
        <taxon>Dikarya</taxon>
        <taxon>Ascomycota</taxon>
        <taxon>Pezizomycotina</taxon>
        <taxon>Eurotiomycetes</taxon>
        <taxon>Eurotiomycetidae</taxon>
        <taxon>Eurotiales</taxon>
        <taxon>Aspergillaceae</taxon>
        <taxon>Aspergillus</taxon>
        <taxon>Aspergillus subgen. Circumdati</taxon>
    </lineage>
</organism>
<gene>
    <name type="primary">creD</name>
    <name type="ORF">ATEG_05869</name>
</gene>
<sequence>MALSFFGGGGSASHAKYFDIRLDEDYIVFRGGEQEAASAHLSGKLILCLSEPLSIKHIRLHLTGISRVCWHLPSSSAGGGRKSWRERVFYEKTWRFREPGKGKTEILPAGNYEYPFNIVLEGSMPESVEGLSDTYVTYRFKAEIGRKYAKDIVVRRPLRIIRTLEPSALELSHAMSVENIWPNKIEYSISTPTKAVIFGTSIRVDFKLIPLLKGLKIGQIVSQLIESHDLTLNPEDPDSIRNTYKNTRTIINDEYELDADNALEIIDEAAEGYQFSRFLDLPKTLTRCLQDTDTKGIKIRHKLKFRVQLLNPDGHISELRATLPVSIFISPNLAIDDNNNLVDQTPQTAQRAVDDLAQQAPPLYGEHQFDQLYSELDPAGYRTPGPGSGPGTPFGTLSRNLSAENLASMNALTTTDISASALHSRLSNLHASRHSNPSPSESENQLESRLGVPTDYFGPSSGSNTHSLTSPELSRRPSDEVDHDHVPSGMATPFHPQYAEVETPEPCPKLFHSGPHFSEDVAIPAPQSPQQAHVRSANRSSSYFNPMDLLHHRPGYPGGHGDEEERQLRLMQARARV</sequence>
<comment type="function">
    <text evidence="1">Component of the regulatory network controlling carbon source utilization through ubiquitination and deubiquitination involving creA, creB, creC, creD and acrB. May be involved in signaling by recognizing appropriately phosphorylated substrates via its arrestin domains and then recruit a HECT-type ubiquitin ligase such as hulA, leading to ubiquitination of the substrate, providing a link between ubiquitination and phosphorylation in protein regulation and stability (By similarity).</text>
</comment>
<comment type="subunit">
    <text evidence="1">Interacts with hulA.</text>
</comment>
<comment type="similarity">
    <text evidence="3">Belongs to the arrestin family.</text>
</comment>